<reference key="1">
    <citation type="journal article" date="2010" name="J. Bacteriol.">
        <title>The Citrobacter rodentium genome sequence reveals convergent evolution with human pathogenic Escherichia coli.</title>
        <authorList>
            <person name="Petty N.K."/>
            <person name="Bulgin R."/>
            <person name="Crepin V.F."/>
            <person name="Cerdeno-Tarraga A.M."/>
            <person name="Schroeder G.N."/>
            <person name="Quail M.A."/>
            <person name="Lennard N."/>
            <person name="Corton C."/>
            <person name="Barron A."/>
            <person name="Clark L."/>
            <person name="Toribio A.L."/>
            <person name="Parkhill J."/>
            <person name="Dougan G."/>
            <person name="Frankel G."/>
            <person name="Thomson N.R."/>
        </authorList>
    </citation>
    <scope>NUCLEOTIDE SEQUENCE [LARGE SCALE GENOMIC DNA]</scope>
    <source>
        <strain>ICC168</strain>
    </source>
</reference>
<reference key="2">
    <citation type="journal article" date="2012" name="Nat. Struct. Mol. Biol.">
        <title>Discovery of an archetypal protein transport system in bacterial outer membranes.</title>
        <authorList>
            <person name="Selkrig J."/>
            <person name="Mosbahi K."/>
            <person name="Webb C.T."/>
            <person name="Belousoff M.J."/>
            <person name="Perry A.J."/>
            <person name="Wells T.J."/>
            <person name="Morris F."/>
            <person name="Leyton D.L."/>
            <person name="Totsika M."/>
            <person name="Phan M.D."/>
            <person name="Celik N."/>
            <person name="Kelly M."/>
            <person name="Oates C."/>
            <person name="Hartland E.L."/>
            <person name="Robins-Browne R.M."/>
            <person name="Ramarathinam S.H."/>
            <person name="Purcell A.W."/>
            <person name="Schembri M.A."/>
            <person name="Strugnell R.A."/>
            <person name="Henderson I.R."/>
            <person name="Walker D."/>
            <person name="Lithgow T."/>
        </authorList>
    </citation>
    <scope>PROTEIN SEQUENCE OF 826-849; 1135-1188; 1248-1288; 1293-1316; 1328-1335; 1343-1390; 1430-1470; 1480-1488 AND 1536-1552</scope>
    <scope>SUBCELLULAR LOCATION</scope>
    <source>
        <strain>ICC169</strain>
    </source>
</reference>
<reference key="3">
    <citation type="journal article" date="2014" name="Cell Host Microbe">
        <title>An iron-containing dodecameric heptosyltransferase family modifies bacterial autotransporters in pathogenesis.</title>
        <authorList>
            <person name="Lu Q."/>
            <person name="Yao Q."/>
            <person name="Xu Y."/>
            <person name="Li L."/>
            <person name="Li S."/>
            <person name="Liu Y."/>
            <person name="Gao W."/>
            <person name="Niu M."/>
            <person name="Sharon M."/>
            <person name="Ben-Nissan G."/>
            <person name="Zamyatina A."/>
            <person name="Liu X."/>
            <person name="Chen S."/>
            <person name="Shao F."/>
        </authorList>
    </citation>
    <scope>FUNCTION</scope>
    <scope>GLYCOSYLATION</scope>
    <scope>DISRUPTION PHENOTYPE</scope>
</reference>
<comment type="function">
    <text evidence="6">Autotransporter required for the colonization of the mouse host gastrointestinal tract, possibly by mediating bacteria adhesion to host cells.</text>
</comment>
<comment type="subcellular location">
    <subcellularLocation>
        <location evidence="5">Cell outer membrane</location>
        <topology evidence="8">Multi-pass membrane protein</topology>
    </subcellularLocation>
    <text evidence="5">The N-terminus is on the cell surface.</text>
</comment>
<comment type="domain">
    <text evidence="1">The signal peptide, cleaved at the inner membrane, guides the autotransporter protein to the periplasmic space (By similarity). Insertion of the C-terminal translocator domain (beta domain) in the outer membrane forms a hydrophilic pore for translocation of the passenger domain to the bacterial cell surface (By similarity).</text>
</comment>
<comment type="PTM">
    <text evidence="6">Glycosylated by heptosyltransferas BAHTCr (PubMed:25211077). Glycosylation is required for adhesion to mammalian cells and colonization of the mouse host gastrointestinal tract (PubMed:25211077).</text>
</comment>
<comment type="disruption phenotype">
    <text evidence="6">Severely reduces bacterial colonization of the gastrointestinal tract of orally infected C57BL/6 mice.</text>
</comment>
<name>ACRAC_CITRI</name>
<geneLocation type="plasmid">
    <name>pCROD1</name>
</geneLocation>
<protein>
    <recommendedName>
        <fullName evidence="7">Autotransporter CRAC</fullName>
    </recommendedName>
    <alternativeName>
        <fullName evidence="7">C.rodentium autotransporter required for colonization protein</fullName>
    </alternativeName>
</protein>
<accession>D2TV88</accession>
<sequence length="1593" mass="160073">MNKVYNTVWNESTGMWVVTSELTRKGGRRPRQIRRTALAGLIAGLLLPSAPALAVDYNNETLGSGATSSSMSLNAGDTATDTTINSGGSQRVSSGGSATSTTINSGGFQYVSSGGSATDTTINSGGYQHVSSGGSATDTTINSGGYLSVSGGGTAVDITQNSGGVIDTNTYATLSGTNINGSFSIVNGSASNMLLENGGFLSVLNGHQATNTTINSGGYLSVYGDGSAVDITQNSGGAISTDTSATLSGTNINGSFSIAGGSASNMLLENRGQLNVNSGHQATNTIINSGGNQHISGGGSATDTTINSAGFQYVYSGGSATSTTINRGGNQYVSGGSATNTTINSGGYLSVYGGGTAVDITQNSGGAIDTNTYATLSGTNINGSFSIAGGSASNMLLENGGYLNVNSGHQATNTTINSGGGLRVSGGGTAVDITQNSGGAISADTSATLSGTNINGSFSIANGSASNMLLENGGSLYVNSGHQATNTTINSGGGLRVSGGGTAVDITQNSGGAIDTNTYATLSGTNINGSFSIANGSASNMLLENGGYLYVDGGHQATNTTINSGGILSVSGGGTAVDITQNSGGVIDTNTYATLSGTNINGSFSIANGSASNMLLENGGFLYVNSGHQAMNTTINNSRSTMNVLGGGSATSTTINSGGYQYVSSGGSATSTTINSGGNQYVSSGGSATDTTINSGGSLVVFDGTAVDITQNSGGAITADTSATLSGTNINGSFSIANGSASNMLLERGSLYVEGGHQATNTTINGGGSMDVSTDGSATNTTINDGGQMYVSTDGSVTSTIVNIGGFVNLLGGSATDTTLNEGGRMLVNPQGSATGTIINRGGYQEILRSAGAANTIINGGQQSVLSGGSATDTTLNSGGAQYINNGGSATDTTLNSGGAQYINNGGSVTNTTINSGGGQYVYINGNVTKTTITDGGILQVDAGGSASQVTQNSGGAIVTNTSAVLSGTNDKGTFSIAGGSASNMSLENGGLLTVLVGHDASDTTVGSDGTLSVQSGGVLRGTTTLTDNGTLVGNMVTNEGNLYFLNNSAATFAGTLTGTGTLTQEGGNTRFSGLLSQDGGITLHSGAAMTMVTLQANANVTTQSGTSLTLDNGSILTGNVTGDNTGAGDMTVKGASVWHLDGDATVGALTLDNGTVDFRPSATTRLTQAFRPVSLVSESLSGNGTFRMNTDIASHTGDMLNVTGNANGNFVLDIRNTGLEPVSAGTPLQVVHTGSGDAAFSLNGGKVDAGTWEYYLNKENTDWYLKADSSQPGTDNPGTDNPVPPVRHTTKSADAVLDMATAPVYVFNSELQSLRFRHGDVMQNTRSPGGVWGRYTGSDTRISGGAGSGYSLTQSGMETGGDTVFDLNESRLAVGAFVSYSDNSISHNRGGSSTVGSTGGGLYATWFNNDGYYVDGVIKVNRFRNELRTWMSDGTAVKGDYHQNGFGGSLEAGRTFSLNENTWIQPYLRSTAFRAESKDISLDNGMKAKAGTTKSLQGEVGVNLGMNLDVAGTVVRPYLTTAVSHEFSDNNRVRINDSYNFTNDISGTTGKYGAGVSAQLTANAGVWAEASYQNGENTESPVTGSVGFRINF</sequence>
<dbReference type="EMBL" id="FN543503">
    <property type="protein sequence ID" value="CBG91774.1"/>
    <property type="molecule type" value="Genomic_DNA"/>
</dbReference>
<dbReference type="RefSeq" id="WP_012908908.1">
    <property type="nucleotide sequence ID" value="NC_013717.1"/>
</dbReference>
<dbReference type="SMR" id="D2TV88"/>
<dbReference type="KEGG" id="cro:ROD_p1121"/>
<dbReference type="HOGENOM" id="CLU_004643_1_0_6"/>
<dbReference type="OrthoDB" id="6477647at2"/>
<dbReference type="PHI-base" id="PHI:5299"/>
<dbReference type="Proteomes" id="UP000001889">
    <property type="component" value="Plasmid pCROD1"/>
</dbReference>
<dbReference type="GO" id="GO:0009279">
    <property type="term" value="C:cell outer membrane"/>
    <property type="evidence" value="ECO:0007669"/>
    <property type="project" value="UniProtKB-SubCell"/>
</dbReference>
<dbReference type="CDD" id="cd01343">
    <property type="entry name" value="PL1_Passenger_AT"/>
    <property type="match status" value="1"/>
</dbReference>
<dbReference type="Gene3D" id="2.160.20.20">
    <property type="match status" value="5"/>
</dbReference>
<dbReference type="Gene3D" id="2.40.128.130">
    <property type="entry name" value="Autotransporter beta-domain"/>
    <property type="match status" value="1"/>
</dbReference>
<dbReference type="InterPro" id="IPR030930">
    <property type="entry name" value="AIDA"/>
</dbReference>
<dbReference type="InterPro" id="IPR005546">
    <property type="entry name" value="Autotransporte_beta"/>
</dbReference>
<dbReference type="InterPro" id="IPR036709">
    <property type="entry name" value="Autotransporte_beta_dom_sf"/>
</dbReference>
<dbReference type="InterPro" id="IPR051551">
    <property type="entry name" value="Autotransporter_adhesion"/>
</dbReference>
<dbReference type="InterPro" id="IPR012332">
    <property type="entry name" value="Autotransporter_pectin_lyase_C"/>
</dbReference>
<dbReference type="InterPro" id="IPR024973">
    <property type="entry name" value="ESPR"/>
</dbReference>
<dbReference type="InterPro" id="IPR006315">
    <property type="entry name" value="OM_autotransptr_brl_dom"/>
</dbReference>
<dbReference type="InterPro" id="IPR011050">
    <property type="entry name" value="Pectin_lyase_fold/virulence"/>
</dbReference>
<dbReference type="InterPro" id="IPR004899">
    <property type="entry name" value="Pertactin_central"/>
</dbReference>
<dbReference type="InterPro" id="IPR003991">
    <property type="entry name" value="Pertactin_virulence_factor"/>
</dbReference>
<dbReference type="NCBIfam" id="TIGR01414">
    <property type="entry name" value="autotrans_barl"/>
    <property type="match status" value="1"/>
</dbReference>
<dbReference type="NCBIfam" id="TIGR04415">
    <property type="entry name" value="O_hepto_targRPT"/>
    <property type="match status" value="20"/>
</dbReference>
<dbReference type="PANTHER" id="PTHR35037:SF7">
    <property type="entry name" value="AUTOTRANSPORTER"/>
    <property type="match status" value="1"/>
</dbReference>
<dbReference type="PANTHER" id="PTHR35037">
    <property type="entry name" value="C-TERMINAL REGION OF AIDA-LIKE PROTEIN"/>
    <property type="match status" value="1"/>
</dbReference>
<dbReference type="Pfam" id="PF16168">
    <property type="entry name" value="AIDA"/>
    <property type="match status" value="10"/>
</dbReference>
<dbReference type="Pfam" id="PF03797">
    <property type="entry name" value="Autotransporter"/>
    <property type="match status" value="1"/>
</dbReference>
<dbReference type="Pfam" id="PF13018">
    <property type="entry name" value="ESPR"/>
    <property type="match status" value="1"/>
</dbReference>
<dbReference type="Pfam" id="PF03212">
    <property type="entry name" value="Pertactin"/>
    <property type="match status" value="1"/>
</dbReference>
<dbReference type="PRINTS" id="PR01484">
    <property type="entry name" value="PRTACTNFAMLY"/>
</dbReference>
<dbReference type="SMART" id="SM00869">
    <property type="entry name" value="Autotransporter"/>
    <property type="match status" value="1"/>
</dbReference>
<dbReference type="SUPFAM" id="SSF103515">
    <property type="entry name" value="Autotransporter"/>
    <property type="match status" value="1"/>
</dbReference>
<dbReference type="SUPFAM" id="SSF51126">
    <property type="entry name" value="Pectin lyase-like"/>
    <property type="match status" value="2"/>
</dbReference>
<dbReference type="PROSITE" id="PS51208">
    <property type="entry name" value="AUTOTRANSPORTER"/>
    <property type="match status" value="1"/>
</dbReference>
<gene>
    <name evidence="7" type="primary">CRAC</name>
    <name type="ordered locus">ROD_p1121</name>
</gene>
<organism>
    <name type="scientific">Citrobacter rodentium (strain ICC168)</name>
    <name type="common">Citrobacter freundii biotype 4280</name>
    <dbReference type="NCBI Taxonomy" id="637910"/>
    <lineage>
        <taxon>Bacteria</taxon>
        <taxon>Pseudomonadati</taxon>
        <taxon>Pseudomonadota</taxon>
        <taxon>Gammaproteobacteria</taxon>
        <taxon>Enterobacterales</taxon>
        <taxon>Enterobacteriaceae</taxon>
        <taxon>Citrobacter</taxon>
    </lineage>
</organism>
<keyword id="KW-0998">Cell outer membrane</keyword>
<keyword id="KW-0903">Direct protein sequencing</keyword>
<keyword id="KW-0325">Glycoprotein</keyword>
<keyword id="KW-0472">Membrane</keyword>
<keyword id="KW-0614">Plasmid</keyword>
<keyword id="KW-1185">Reference proteome</keyword>
<keyword id="KW-0732">Signal</keyword>
<keyword id="KW-0812">Transmembrane</keyword>
<keyword id="KW-1134">Transmembrane beta strand</keyword>
<keyword id="KW-0843">Virulence</keyword>
<evidence type="ECO:0000250" key="1">
    <source>
        <dbReference type="UniProtKB" id="Q03155"/>
    </source>
</evidence>
<evidence type="ECO:0000255" key="2"/>
<evidence type="ECO:0000255" key="3">
    <source>
        <dbReference type="PROSITE-ProRule" id="PRU00556"/>
    </source>
</evidence>
<evidence type="ECO:0000256" key="4">
    <source>
        <dbReference type="SAM" id="MobiDB-lite"/>
    </source>
</evidence>
<evidence type="ECO:0000269" key="5">
    <source>
    </source>
</evidence>
<evidence type="ECO:0000269" key="6">
    <source>
    </source>
</evidence>
<evidence type="ECO:0000303" key="7">
    <source>
    </source>
</evidence>
<evidence type="ECO:0000305" key="8"/>
<feature type="signal peptide" evidence="2">
    <location>
        <begin position="1"/>
        <end position="54"/>
    </location>
</feature>
<feature type="chain" id="PRO_0000418091" description="Autotransporter CRAC">
    <location>
        <begin position="55"/>
        <end position="1593"/>
    </location>
</feature>
<feature type="domain" description="Autotransporter" evidence="3">
    <location>
        <begin position="1325"/>
        <end position="1593"/>
    </location>
</feature>
<feature type="region of interest" description="Disordered" evidence="4">
    <location>
        <begin position="65"/>
        <end position="100"/>
    </location>
</feature>
<feature type="region of interest" description="Disordered" evidence="4">
    <location>
        <begin position="1267"/>
        <end position="1286"/>
    </location>
</feature>
<feature type="compositionally biased region" description="Polar residues" evidence="4">
    <location>
        <begin position="65"/>
        <end position="85"/>
    </location>
</feature>
<feature type="compositionally biased region" description="Low complexity" evidence="4">
    <location>
        <begin position="86"/>
        <end position="97"/>
    </location>
</feature>
<feature type="compositionally biased region" description="Polar residues" evidence="4">
    <location>
        <begin position="1269"/>
        <end position="1280"/>
    </location>
</feature>
<proteinExistence type="evidence at protein level"/>